<gene>
    <name evidence="4" type="ORF">C09F5.3</name>
</gene>
<name>YQ23_CAEEL</name>
<dbReference type="EMBL" id="BX284603">
    <property type="protein sequence ID" value="CCD63977.2"/>
    <property type="molecule type" value="Genomic_DNA"/>
</dbReference>
<dbReference type="PIR" id="T15478">
    <property type="entry name" value="T15478"/>
</dbReference>
<dbReference type="RefSeq" id="NP_001367485.1">
    <property type="nucleotide sequence ID" value="NM_001381696.2"/>
</dbReference>
<dbReference type="RefSeq" id="NP_497233.2">
    <property type="nucleotide sequence ID" value="NM_064832.2"/>
</dbReference>
<dbReference type="SMR" id="Q09452"/>
<dbReference type="BioGRID" id="47306">
    <property type="interactions" value="1"/>
</dbReference>
<dbReference type="FunCoup" id="Q09452">
    <property type="interactions" value="5"/>
</dbReference>
<dbReference type="IntAct" id="Q09452">
    <property type="interactions" value="1"/>
</dbReference>
<dbReference type="STRING" id="6239.C09F5.3.1"/>
<dbReference type="PaxDb" id="6239-C09F5.3"/>
<dbReference type="EnsemblMetazoa" id="C09F5.3.1">
    <property type="protein sequence ID" value="C09F5.3.1"/>
    <property type="gene ID" value="WBGene00015649"/>
</dbReference>
<dbReference type="GeneID" id="182454"/>
<dbReference type="UCSC" id="C09F5.3">
    <property type="organism name" value="c. elegans"/>
</dbReference>
<dbReference type="AGR" id="WB:WBGene00015649"/>
<dbReference type="WormBase" id="C09F5.3">
    <property type="protein sequence ID" value="CE54181"/>
    <property type="gene ID" value="WBGene00015649"/>
</dbReference>
<dbReference type="eggNOG" id="KOG1721">
    <property type="taxonomic scope" value="Eukaryota"/>
</dbReference>
<dbReference type="GeneTree" id="ENSGT00940000166024"/>
<dbReference type="HOGENOM" id="CLU_728101_0_0_1"/>
<dbReference type="InParanoid" id="Q09452"/>
<dbReference type="OrthoDB" id="10014897at2759"/>
<dbReference type="PhylomeDB" id="Q09452"/>
<dbReference type="PRO" id="PR:Q09452"/>
<dbReference type="Proteomes" id="UP000001940">
    <property type="component" value="Chromosome III"/>
</dbReference>
<dbReference type="Bgee" id="WBGene00015649">
    <property type="expression patterns" value="Expressed in pharyngeal muscle cell (C elegans) and 3 other cell types or tissues"/>
</dbReference>
<dbReference type="GO" id="GO:0005694">
    <property type="term" value="C:chromosome"/>
    <property type="evidence" value="ECO:0000318"/>
    <property type="project" value="GO_Central"/>
</dbReference>
<dbReference type="GO" id="GO:0005634">
    <property type="term" value="C:nucleus"/>
    <property type="evidence" value="ECO:0007669"/>
    <property type="project" value="UniProtKB-SubCell"/>
</dbReference>
<dbReference type="GO" id="GO:0043035">
    <property type="term" value="F:chromatin insulator sequence binding"/>
    <property type="evidence" value="ECO:0000318"/>
    <property type="project" value="GO_Central"/>
</dbReference>
<dbReference type="GO" id="GO:0008270">
    <property type="term" value="F:zinc ion binding"/>
    <property type="evidence" value="ECO:0007669"/>
    <property type="project" value="UniProtKB-KW"/>
</dbReference>
<dbReference type="GO" id="GO:0006357">
    <property type="term" value="P:regulation of transcription by RNA polymerase II"/>
    <property type="evidence" value="ECO:0000318"/>
    <property type="project" value="GO_Central"/>
</dbReference>
<dbReference type="FunFam" id="3.30.160.60:FF:003957">
    <property type="entry name" value="Putative zinc finger protein C09F5.3"/>
    <property type="match status" value="1"/>
</dbReference>
<dbReference type="Gene3D" id="3.30.160.60">
    <property type="entry name" value="Classic Zinc Finger"/>
    <property type="match status" value="2"/>
</dbReference>
<dbReference type="InterPro" id="IPR013087">
    <property type="entry name" value="Znf_C2H2_type"/>
</dbReference>
<dbReference type="PANTHER" id="PTHR24379:SF121">
    <property type="entry name" value="C2H2-TYPE DOMAIN-CONTAINING PROTEIN"/>
    <property type="match status" value="1"/>
</dbReference>
<dbReference type="PANTHER" id="PTHR24379">
    <property type="entry name" value="KRAB AND ZINC FINGER DOMAIN-CONTAINING"/>
    <property type="match status" value="1"/>
</dbReference>
<dbReference type="SMART" id="SM00355">
    <property type="entry name" value="ZnF_C2H2"/>
    <property type="match status" value="10"/>
</dbReference>
<dbReference type="PROSITE" id="PS00028">
    <property type="entry name" value="ZINC_FINGER_C2H2_1"/>
    <property type="match status" value="8"/>
</dbReference>
<dbReference type="PROSITE" id="PS50157">
    <property type="entry name" value="ZINC_FINGER_C2H2_2"/>
    <property type="match status" value="2"/>
</dbReference>
<evidence type="ECO:0000255" key="1">
    <source>
        <dbReference type="PROSITE-ProRule" id="PRU00042"/>
    </source>
</evidence>
<evidence type="ECO:0000256" key="2">
    <source>
        <dbReference type="SAM" id="MobiDB-lite"/>
    </source>
</evidence>
<evidence type="ECO:0000305" key="3"/>
<evidence type="ECO:0000312" key="4">
    <source>
        <dbReference type="WormBase" id="C09F5.3"/>
    </source>
</evidence>
<protein>
    <recommendedName>
        <fullName>Putative zinc finger protein C09F5.3</fullName>
    </recommendedName>
</protein>
<comment type="subcellular location">
    <subcellularLocation>
        <location evidence="3">Nucleus</location>
    </subcellularLocation>
</comment>
<reference key="1">
    <citation type="journal article" date="1998" name="Science">
        <title>Genome sequence of the nematode C. elegans: a platform for investigating biology.</title>
        <authorList>
            <consortium name="The C. elegans sequencing consortium"/>
        </authorList>
    </citation>
    <scope>NUCLEOTIDE SEQUENCE [LARGE SCALE GENOMIC DNA]</scope>
    <source>
        <strain>Bristol N2</strain>
    </source>
</reference>
<proteinExistence type="predicted"/>
<keyword id="KW-0238">DNA-binding</keyword>
<keyword id="KW-0479">Metal-binding</keyword>
<keyword id="KW-0539">Nucleus</keyword>
<keyword id="KW-1185">Reference proteome</keyword>
<keyword id="KW-0677">Repeat</keyword>
<keyword id="KW-0862">Zinc</keyword>
<keyword id="KW-0863">Zinc-finger</keyword>
<sequence>MRKTEKMKRPHNSSHVKQEERADDSHSNSPASSKSIKQENLLKCELCSTVCSSISQLQSHTLSEHVPEKKPSISTSNSAPSTKRVACQQCEDTFEDFAQFAIHMKSHLSSVTSQLFFCPICPVGTPFRDKKSQLEHLTTQHLQIQVTQHICSICDSAFPSPQAQSVHFAEAHKKYSCTNCDFETENEKTFKEHSKQHSRQLIMYGCALCATSYPSQLHLITHVQMSHDQETFYPPSLPIPTPPSPKSTPKQRVLQCSVCDESVLGEDGLDEHRLRKHCKVRFADKCADCQEPLLNETSFVEHCLRHSKDHAHHCPVCRQSLRSDSQIHAHCAYHMSHQDSTSSTSSSPITNGFSFVCPICGEKLDDGFALIEHTKIHL</sequence>
<feature type="chain" id="PRO_0000046902" description="Putative zinc finger protein C09F5.3">
    <location>
        <begin position="1"/>
        <end position="378"/>
    </location>
</feature>
<feature type="zinc finger region" description="C2H2-type 1" evidence="1">
    <location>
        <begin position="42"/>
        <end position="65"/>
    </location>
</feature>
<feature type="zinc finger region" description="C2H2-type 2; degenerate" evidence="1">
    <location>
        <begin position="85"/>
        <end position="107"/>
    </location>
</feature>
<feature type="zinc finger region" description="C2H2-type 3; degenerate" evidence="1">
    <location>
        <begin position="204"/>
        <end position="226"/>
    </location>
</feature>
<feature type="zinc finger region" description="C2H2-type 4" evidence="1">
    <location>
        <begin position="254"/>
        <end position="277"/>
    </location>
</feature>
<feature type="zinc finger region" description="C2H2-type 5" evidence="1">
    <location>
        <begin position="284"/>
        <end position="306"/>
    </location>
</feature>
<feature type="zinc finger region" description="C2H2-type 6" evidence="1">
    <location>
        <begin position="312"/>
        <end position="334"/>
    </location>
</feature>
<feature type="zinc finger region" description="C2H2-type 7" evidence="1">
    <location>
        <begin position="355"/>
        <end position="377"/>
    </location>
</feature>
<feature type="region of interest" description="Disordered" evidence="2">
    <location>
        <begin position="1"/>
        <end position="36"/>
    </location>
</feature>
<feature type="region of interest" description="Disordered" evidence="2">
    <location>
        <begin position="61"/>
        <end position="80"/>
    </location>
</feature>
<feature type="region of interest" description="Disordered" evidence="2">
    <location>
        <begin position="231"/>
        <end position="250"/>
    </location>
</feature>
<feature type="compositionally biased region" description="Basic residues" evidence="2">
    <location>
        <begin position="1"/>
        <end position="14"/>
    </location>
</feature>
<feature type="compositionally biased region" description="Basic and acidic residues" evidence="2">
    <location>
        <begin position="16"/>
        <end position="26"/>
    </location>
</feature>
<feature type="compositionally biased region" description="Basic and acidic residues" evidence="2">
    <location>
        <begin position="62"/>
        <end position="71"/>
    </location>
</feature>
<feature type="compositionally biased region" description="Pro residues" evidence="2">
    <location>
        <begin position="235"/>
        <end position="246"/>
    </location>
</feature>
<accession>Q09452</accession>
<organism>
    <name type="scientific">Caenorhabditis elegans</name>
    <dbReference type="NCBI Taxonomy" id="6239"/>
    <lineage>
        <taxon>Eukaryota</taxon>
        <taxon>Metazoa</taxon>
        <taxon>Ecdysozoa</taxon>
        <taxon>Nematoda</taxon>
        <taxon>Chromadorea</taxon>
        <taxon>Rhabditida</taxon>
        <taxon>Rhabditina</taxon>
        <taxon>Rhabditomorpha</taxon>
        <taxon>Rhabditoidea</taxon>
        <taxon>Rhabditidae</taxon>
        <taxon>Peloderinae</taxon>
        <taxon>Caenorhabditis</taxon>
    </lineage>
</organism>